<protein>
    <recommendedName>
        <fullName evidence="1">GTPase Obg</fullName>
        <ecNumber evidence="1">3.6.5.-</ecNumber>
    </recommendedName>
    <alternativeName>
        <fullName evidence="1">GTP-binding protein Obg</fullName>
    </alternativeName>
</protein>
<keyword id="KW-0963">Cytoplasm</keyword>
<keyword id="KW-0342">GTP-binding</keyword>
<keyword id="KW-0378">Hydrolase</keyword>
<keyword id="KW-0460">Magnesium</keyword>
<keyword id="KW-0479">Metal-binding</keyword>
<keyword id="KW-0547">Nucleotide-binding</keyword>
<keyword id="KW-1185">Reference proteome</keyword>
<organism>
    <name type="scientific">Fervidobacterium nodosum (strain ATCC 35602 / DSM 5306 / Rt17-B1)</name>
    <dbReference type="NCBI Taxonomy" id="381764"/>
    <lineage>
        <taxon>Bacteria</taxon>
        <taxon>Thermotogati</taxon>
        <taxon>Thermotogota</taxon>
        <taxon>Thermotogae</taxon>
        <taxon>Thermotogales</taxon>
        <taxon>Fervidobacteriaceae</taxon>
        <taxon>Fervidobacterium</taxon>
    </lineage>
</organism>
<dbReference type="EC" id="3.6.5.-" evidence="1"/>
<dbReference type="EMBL" id="CP000771">
    <property type="protein sequence ID" value="ABS60231.1"/>
    <property type="molecule type" value="Genomic_DNA"/>
</dbReference>
<dbReference type="RefSeq" id="WP_011993551.1">
    <property type="nucleotide sequence ID" value="NC_009718.1"/>
</dbReference>
<dbReference type="SMR" id="A7HJZ8"/>
<dbReference type="STRING" id="381764.Fnod_0366"/>
<dbReference type="KEGG" id="fno:Fnod_0366"/>
<dbReference type="eggNOG" id="COG0536">
    <property type="taxonomic scope" value="Bacteria"/>
</dbReference>
<dbReference type="HOGENOM" id="CLU_011747_2_0_0"/>
<dbReference type="OrthoDB" id="9807318at2"/>
<dbReference type="Proteomes" id="UP000002415">
    <property type="component" value="Chromosome"/>
</dbReference>
<dbReference type="GO" id="GO:0005737">
    <property type="term" value="C:cytoplasm"/>
    <property type="evidence" value="ECO:0007669"/>
    <property type="project" value="UniProtKB-SubCell"/>
</dbReference>
<dbReference type="GO" id="GO:0005525">
    <property type="term" value="F:GTP binding"/>
    <property type="evidence" value="ECO:0007669"/>
    <property type="project" value="UniProtKB-UniRule"/>
</dbReference>
<dbReference type="GO" id="GO:0003924">
    <property type="term" value="F:GTPase activity"/>
    <property type="evidence" value="ECO:0007669"/>
    <property type="project" value="UniProtKB-UniRule"/>
</dbReference>
<dbReference type="GO" id="GO:0000287">
    <property type="term" value="F:magnesium ion binding"/>
    <property type="evidence" value="ECO:0007669"/>
    <property type="project" value="InterPro"/>
</dbReference>
<dbReference type="GO" id="GO:0042254">
    <property type="term" value="P:ribosome biogenesis"/>
    <property type="evidence" value="ECO:0007669"/>
    <property type="project" value="UniProtKB-UniRule"/>
</dbReference>
<dbReference type="CDD" id="cd01898">
    <property type="entry name" value="Obg"/>
    <property type="match status" value="1"/>
</dbReference>
<dbReference type="FunFam" id="2.70.210.12:FF:000001">
    <property type="entry name" value="GTPase Obg"/>
    <property type="match status" value="1"/>
</dbReference>
<dbReference type="Gene3D" id="3.30.300.350">
    <property type="entry name" value="GTP-binding protein OBG, C-terminal domain"/>
    <property type="match status" value="1"/>
</dbReference>
<dbReference type="Gene3D" id="2.70.210.12">
    <property type="entry name" value="GTP1/OBG domain"/>
    <property type="match status" value="1"/>
</dbReference>
<dbReference type="Gene3D" id="3.40.50.300">
    <property type="entry name" value="P-loop containing nucleotide triphosphate hydrolases"/>
    <property type="match status" value="1"/>
</dbReference>
<dbReference type="HAMAP" id="MF_01454">
    <property type="entry name" value="GTPase_Obg"/>
    <property type="match status" value="1"/>
</dbReference>
<dbReference type="InterPro" id="IPR031167">
    <property type="entry name" value="G_OBG"/>
</dbReference>
<dbReference type="InterPro" id="IPR006073">
    <property type="entry name" value="GTP-bd"/>
</dbReference>
<dbReference type="InterPro" id="IPR014100">
    <property type="entry name" value="GTP-bd_Obg/CgtA"/>
</dbReference>
<dbReference type="InterPro" id="IPR036346">
    <property type="entry name" value="GTP-bd_prot_GTP1/OBG_C_sf"/>
</dbReference>
<dbReference type="InterPro" id="IPR006074">
    <property type="entry name" value="GTP1-OBG_CS"/>
</dbReference>
<dbReference type="InterPro" id="IPR006169">
    <property type="entry name" value="GTP1_OBG_dom"/>
</dbReference>
<dbReference type="InterPro" id="IPR036726">
    <property type="entry name" value="GTP1_OBG_dom_sf"/>
</dbReference>
<dbReference type="InterPro" id="IPR045086">
    <property type="entry name" value="OBG_GTPase"/>
</dbReference>
<dbReference type="InterPro" id="IPR015349">
    <property type="entry name" value="OCT_dom"/>
</dbReference>
<dbReference type="InterPro" id="IPR027417">
    <property type="entry name" value="P-loop_NTPase"/>
</dbReference>
<dbReference type="NCBIfam" id="TIGR02729">
    <property type="entry name" value="Obg_CgtA"/>
    <property type="match status" value="1"/>
</dbReference>
<dbReference type="NCBIfam" id="TIGR03595">
    <property type="entry name" value="Obg_CgtA_exten"/>
    <property type="match status" value="1"/>
</dbReference>
<dbReference type="NCBIfam" id="NF008954">
    <property type="entry name" value="PRK12296.1"/>
    <property type="match status" value="1"/>
</dbReference>
<dbReference type="NCBIfam" id="NF008955">
    <property type="entry name" value="PRK12297.1"/>
    <property type="match status" value="1"/>
</dbReference>
<dbReference type="NCBIfam" id="NF008956">
    <property type="entry name" value="PRK12299.1"/>
    <property type="match status" value="1"/>
</dbReference>
<dbReference type="PANTHER" id="PTHR11702">
    <property type="entry name" value="DEVELOPMENTALLY REGULATED GTP-BINDING PROTEIN-RELATED"/>
    <property type="match status" value="1"/>
</dbReference>
<dbReference type="PANTHER" id="PTHR11702:SF31">
    <property type="entry name" value="MITOCHONDRIAL RIBOSOME-ASSOCIATED GTPASE 2"/>
    <property type="match status" value="1"/>
</dbReference>
<dbReference type="Pfam" id="PF09269">
    <property type="entry name" value="DUF1967"/>
    <property type="match status" value="1"/>
</dbReference>
<dbReference type="Pfam" id="PF01018">
    <property type="entry name" value="GTP1_OBG"/>
    <property type="match status" value="1"/>
</dbReference>
<dbReference type="Pfam" id="PF01926">
    <property type="entry name" value="MMR_HSR1"/>
    <property type="match status" value="1"/>
</dbReference>
<dbReference type="PRINTS" id="PR00326">
    <property type="entry name" value="GTP1OBG"/>
</dbReference>
<dbReference type="SUPFAM" id="SSF102741">
    <property type="entry name" value="Obg GTP-binding protein C-terminal domain"/>
    <property type="match status" value="1"/>
</dbReference>
<dbReference type="SUPFAM" id="SSF82051">
    <property type="entry name" value="Obg GTP-binding protein N-terminal domain"/>
    <property type="match status" value="1"/>
</dbReference>
<dbReference type="SUPFAM" id="SSF52540">
    <property type="entry name" value="P-loop containing nucleoside triphosphate hydrolases"/>
    <property type="match status" value="1"/>
</dbReference>
<dbReference type="PROSITE" id="PS51710">
    <property type="entry name" value="G_OBG"/>
    <property type="match status" value="1"/>
</dbReference>
<dbReference type="PROSITE" id="PS00905">
    <property type="entry name" value="GTP1_OBG"/>
    <property type="match status" value="1"/>
</dbReference>
<dbReference type="PROSITE" id="PS51883">
    <property type="entry name" value="OBG"/>
    <property type="match status" value="1"/>
</dbReference>
<dbReference type="PROSITE" id="PS51881">
    <property type="entry name" value="OCT"/>
    <property type="match status" value="1"/>
</dbReference>
<gene>
    <name evidence="1" type="primary">obg</name>
    <name type="ordered locus">Fnod_0366</name>
</gene>
<feature type="chain" id="PRO_0000385931" description="GTPase Obg">
    <location>
        <begin position="1"/>
        <end position="439"/>
    </location>
</feature>
<feature type="domain" description="Obg" evidence="3">
    <location>
        <begin position="4"/>
        <end position="162"/>
    </location>
</feature>
<feature type="domain" description="OBG-type G" evidence="1">
    <location>
        <begin position="163"/>
        <end position="336"/>
    </location>
</feature>
<feature type="domain" description="OCT" evidence="2">
    <location>
        <begin position="361"/>
        <end position="439"/>
    </location>
</feature>
<feature type="binding site" evidence="1">
    <location>
        <begin position="169"/>
        <end position="176"/>
    </location>
    <ligand>
        <name>GTP</name>
        <dbReference type="ChEBI" id="CHEBI:37565"/>
    </ligand>
</feature>
<feature type="binding site" evidence="1">
    <location>
        <position position="176"/>
    </location>
    <ligand>
        <name>Mg(2+)</name>
        <dbReference type="ChEBI" id="CHEBI:18420"/>
    </ligand>
</feature>
<feature type="binding site" evidence="1">
    <location>
        <begin position="194"/>
        <end position="198"/>
    </location>
    <ligand>
        <name>GTP</name>
        <dbReference type="ChEBI" id="CHEBI:37565"/>
    </ligand>
</feature>
<feature type="binding site" evidence="1">
    <location>
        <position position="196"/>
    </location>
    <ligand>
        <name>Mg(2+)</name>
        <dbReference type="ChEBI" id="CHEBI:18420"/>
    </ligand>
</feature>
<feature type="binding site" evidence="1">
    <location>
        <begin position="218"/>
        <end position="221"/>
    </location>
    <ligand>
        <name>GTP</name>
        <dbReference type="ChEBI" id="CHEBI:37565"/>
    </ligand>
</feature>
<feature type="binding site" evidence="1">
    <location>
        <begin position="288"/>
        <end position="291"/>
    </location>
    <ligand>
        <name>GTP</name>
        <dbReference type="ChEBI" id="CHEBI:37565"/>
    </ligand>
</feature>
<feature type="binding site" evidence="1">
    <location>
        <begin position="317"/>
        <end position="319"/>
    </location>
    <ligand>
        <name>GTP</name>
        <dbReference type="ChEBI" id="CHEBI:37565"/>
    </ligand>
</feature>
<reference key="1">
    <citation type="submission" date="2007-07" db="EMBL/GenBank/DDBJ databases">
        <title>Complete sequence of Fervidobacterium nodosum Rt17-B1.</title>
        <authorList>
            <consortium name="US DOE Joint Genome Institute"/>
            <person name="Copeland A."/>
            <person name="Lucas S."/>
            <person name="Lapidus A."/>
            <person name="Barry K."/>
            <person name="Glavina del Rio T."/>
            <person name="Dalin E."/>
            <person name="Tice H."/>
            <person name="Pitluck S."/>
            <person name="Saunders E."/>
            <person name="Brettin T."/>
            <person name="Bruce D."/>
            <person name="Detter J.C."/>
            <person name="Han C."/>
            <person name="Schmutz J."/>
            <person name="Larimer F."/>
            <person name="Land M."/>
            <person name="Hauser L."/>
            <person name="Kyrpides N."/>
            <person name="Mikhailova N."/>
            <person name="Nelson K."/>
            <person name="Gogarten J.P."/>
            <person name="Noll K."/>
            <person name="Richardson P."/>
        </authorList>
    </citation>
    <scope>NUCLEOTIDE SEQUENCE [LARGE SCALE GENOMIC DNA]</scope>
    <source>
        <strain>ATCC 35602 / DSM 5306 / Rt17-B1</strain>
    </source>
</reference>
<accession>A7HJZ8</accession>
<comment type="function">
    <text evidence="1">An essential GTPase which binds GTP, GDP and possibly (p)ppGpp with moderate affinity, with high nucleotide exchange rates and a fairly low GTP hydrolysis rate. Plays a role in control of the cell cycle, stress response, ribosome biogenesis and in those bacteria that undergo differentiation, in morphogenesis control.</text>
</comment>
<comment type="cofactor">
    <cofactor evidence="1">
        <name>Mg(2+)</name>
        <dbReference type="ChEBI" id="CHEBI:18420"/>
    </cofactor>
</comment>
<comment type="subunit">
    <text evidence="1">Monomer.</text>
</comment>
<comment type="subcellular location">
    <subcellularLocation>
        <location evidence="1">Cytoplasm</location>
    </subcellularLocation>
</comment>
<comment type="similarity">
    <text evidence="1">Belongs to the TRAFAC class OBG-HflX-like GTPase superfamily. OBG GTPase family.</text>
</comment>
<evidence type="ECO:0000255" key="1">
    <source>
        <dbReference type="HAMAP-Rule" id="MF_01454"/>
    </source>
</evidence>
<evidence type="ECO:0000255" key="2">
    <source>
        <dbReference type="PROSITE-ProRule" id="PRU01229"/>
    </source>
</evidence>
<evidence type="ECO:0000255" key="3">
    <source>
        <dbReference type="PROSITE-ProRule" id="PRU01231"/>
    </source>
</evidence>
<name>OBG_FERNB</name>
<sequence length="439" mass="48381">MERIEFIDVVDIYVKAGDGGNGAVTFRREKYIPFGGPDGGDGGDGGYVFLVADTTLSTLYHLTEKKKYFAENAQNGRSRKQNGKNGADLVLRVPVGTIVKDYDTGEIIADLDEPGKYCCVARGGKGGRGNTHFKSSTNQAPKFAEQGAKGEEKHIQLELKLLADVGLIGYPNVGKSSIISKISNARPKIANYPFTTLVPNLGVVSINGTPETSFVVADIPGLIKGASEGKGLGNVFLKHVERCSVIVHVIDVSGSEGRDPIQDYFDIRKELEFFSKDLAKKRELIVGNKSDLLTPEEINAVKDRFLKEIGEGILLISAVTGQGINELKYAMWDIIKESKKMYVGTIDITKIEFEKPSPVRLVLPDRVDIKILKNDKGEFIVESEYIKSYLEKYKMEAKFMLEDVLDILQKNGLDEKLKKAGAKDGDTVWVEGVDFIFKE</sequence>
<proteinExistence type="inferred from homology"/>